<accession>B0BC43</accession>
<reference key="1">
    <citation type="journal article" date="2008" name="Genome Res.">
        <title>Chlamydia trachomatis: genome sequence analysis of lymphogranuloma venereum isolates.</title>
        <authorList>
            <person name="Thomson N.R."/>
            <person name="Holden M.T.G."/>
            <person name="Carder C."/>
            <person name="Lennard N."/>
            <person name="Lockey S.J."/>
            <person name="Marsh P."/>
            <person name="Skipp P."/>
            <person name="O'Connor C.D."/>
            <person name="Goodhead I."/>
            <person name="Norbertzcak H."/>
            <person name="Harris B."/>
            <person name="Ormond D."/>
            <person name="Rance R."/>
            <person name="Quail M.A."/>
            <person name="Parkhill J."/>
            <person name="Stephens R.S."/>
            <person name="Clarke I.N."/>
        </authorList>
    </citation>
    <scope>NUCLEOTIDE SEQUENCE [LARGE SCALE GENOMIC DNA]</scope>
    <source>
        <strain>UCH-1/proctitis</strain>
    </source>
</reference>
<name>LSPA_CHLTB</name>
<proteinExistence type="inferred from homology"/>
<protein>
    <recommendedName>
        <fullName evidence="1">Lipoprotein signal peptidase</fullName>
        <ecNumber evidence="1">3.4.23.36</ecNumber>
    </recommendedName>
    <alternativeName>
        <fullName evidence="1">Prolipoprotein signal peptidase</fullName>
    </alternativeName>
    <alternativeName>
        <fullName evidence="1">Signal peptidase II</fullName>
        <shortName evidence="1">SPase II</shortName>
    </alternativeName>
</protein>
<keyword id="KW-0064">Aspartyl protease</keyword>
<keyword id="KW-0997">Cell inner membrane</keyword>
<keyword id="KW-1003">Cell membrane</keyword>
<keyword id="KW-0378">Hydrolase</keyword>
<keyword id="KW-0472">Membrane</keyword>
<keyword id="KW-0645">Protease</keyword>
<keyword id="KW-0812">Transmembrane</keyword>
<keyword id="KW-1133">Transmembrane helix</keyword>
<sequence length="167" mass="18911">MPTRSLPTFLTLLLLASIDWVSKLVVLLKSCQLSPHSSAFLYSYVWGHFSFLIIPSFNEGAAFGLFAQYKIPLLIFRVCVILGLALFLRIKYKSLHRRTRIALTLILAGALGNVGDILLHGKVVDFLFLSYYSWRFPSFNLADAFISIGTLLLIGHLYFNKESKKCF</sequence>
<dbReference type="EC" id="3.4.23.36" evidence="1"/>
<dbReference type="EMBL" id="AM884177">
    <property type="protein sequence ID" value="CAP07058.1"/>
    <property type="molecule type" value="Genomic_DNA"/>
</dbReference>
<dbReference type="RefSeq" id="WP_012263651.1">
    <property type="nucleotide sequence ID" value="NC_010280.2"/>
</dbReference>
<dbReference type="SMR" id="B0BC43"/>
<dbReference type="KEGG" id="ctl:CTLon_0661"/>
<dbReference type="HOGENOM" id="CLU_083252_3_0_0"/>
<dbReference type="UniPathway" id="UPA00665"/>
<dbReference type="Proteomes" id="UP001154401">
    <property type="component" value="Chromosome"/>
</dbReference>
<dbReference type="GO" id="GO:0005886">
    <property type="term" value="C:plasma membrane"/>
    <property type="evidence" value="ECO:0007669"/>
    <property type="project" value="UniProtKB-SubCell"/>
</dbReference>
<dbReference type="GO" id="GO:0004190">
    <property type="term" value="F:aspartic-type endopeptidase activity"/>
    <property type="evidence" value="ECO:0007669"/>
    <property type="project" value="UniProtKB-UniRule"/>
</dbReference>
<dbReference type="GO" id="GO:0006508">
    <property type="term" value="P:proteolysis"/>
    <property type="evidence" value="ECO:0007669"/>
    <property type="project" value="UniProtKB-KW"/>
</dbReference>
<dbReference type="HAMAP" id="MF_00161">
    <property type="entry name" value="LspA"/>
    <property type="match status" value="1"/>
</dbReference>
<dbReference type="InterPro" id="IPR001872">
    <property type="entry name" value="Peptidase_A8"/>
</dbReference>
<dbReference type="NCBIfam" id="TIGR00077">
    <property type="entry name" value="lspA"/>
    <property type="match status" value="1"/>
</dbReference>
<dbReference type="PANTHER" id="PTHR33695">
    <property type="entry name" value="LIPOPROTEIN SIGNAL PEPTIDASE"/>
    <property type="match status" value="1"/>
</dbReference>
<dbReference type="PANTHER" id="PTHR33695:SF1">
    <property type="entry name" value="LIPOPROTEIN SIGNAL PEPTIDASE"/>
    <property type="match status" value="1"/>
</dbReference>
<dbReference type="Pfam" id="PF01252">
    <property type="entry name" value="Peptidase_A8"/>
    <property type="match status" value="1"/>
</dbReference>
<dbReference type="PRINTS" id="PR00781">
    <property type="entry name" value="LIPOSIGPTASE"/>
</dbReference>
<dbReference type="PROSITE" id="PS00855">
    <property type="entry name" value="SPASE_II"/>
    <property type="match status" value="1"/>
</dbReference>
<organism>
    <name type="scientific">Chlamydia trachomatis serovar L2b (strain UCH-1/proctitis)</name>
    <dbReference type="NCBI Taxonomy" id="471473"/>
    <lineage>
        <taxon>Bacteria</taxon>
        <taxon>Pseudomonadati</taxon>
        <taxon>Chlamydiota</taxon>
        <taxon>Chlamydiia</taxon>
        <taxon>Chlamydiales</taxon>
        <taxon>Chlamydiaceae</taxon>
        <taxon>Chlamydia/Chlamydophila group</taxon>
        <taxon>Chlamydia</taxon>
    </lineage>
</organism>
<evidence type="ECO:0000255" key="1">
    <source>
        <dbReference type="HAMAP-Rule" id="MF_00161"/>
    </source>
</evidence>
<feature type="chain" id="PRO_1000097250" description="Lipoprotein signal peptidase">
    <location>
        <begin position="1"/>
        <end position="167"/>
    </location>
</feature>
<feature type="transmembrane region" description="Helical" evidence="1">
    <location>
        <begin position="8"/>
        <end position="28"/>
    </location>
</feature>
<feature type="transmembrane region" description="Helical" evidence="1">
    <location>
        <begin position="46"/>
        <end position="66"/>
    </location>
</feature>
<feature type="transmembrane region" description="Helical" evidence="1">
    <location>
        <begin position="68"/>
        <end position="88"/>
    </location>
</feature>
<feature type="transmembrane region" description="Helical" evidence="1">
    <location>
        <begin position="101"/>
        <end position="121"/>
    </location>
</feature>
<feature type="transmembrane region" description="Helical" evidence="1">
    <location>
        <begin position="139"/>
        <end position="159"/>
    </location>
</feature>
<feature type="active site" evidence="1">
    <location>
        <position position="125"/>
    </location>
</feature>
<feature type="active site" evidence="1">
    <location>
        <position position="143"/>
    </location>
</feature>
<comment type="function">
    <text evidence="1">This protein specifically catalyzes the removal of signal peptides from prolipoproteins.</text>
</comment>
<comment type="catalytic activity">
    <reaction evidence="1">
        <text>Release of signal peptides from bacterial membrane prolipoproteins. Hydrolyzes -Xaa-Yaa-Zaa-|-(S,diacylglyceryl)Cys-, in which Xaa is hydrophobic (preferably Leu), and Yaa (Ala or Ser) and Zaa (Gly or Ala) have small, neutral side chains.</text>
        <dbReference type="EC" id="3.4.23.36"/>
    </reaction>
</comment>
<comment type="pathway">
    <text evidence="1">Protein modification; lipoprotein biosynthesis (signal peptide cleavage).</text>
</comment>
<comment type="subcellular location">
    <subcellularLocation>
        <location evidence="1">Cell inner membrane</location>
        <topology evidence="1">Multi-pass membrane protein</topology>
    </subcellularLocation>
</comment>
<comment type="similarity">
    <text evidence="1">Belongs to the peptidase A8 family.</text>
</comment>
<gene>
    <name evidence="1" type="primary">lspA</name>
    <name type="ordered locus">CTLon_0661</name>
</gene>